<evidence type="ECO:0000250" key="1">
    <source>
        <dbReference type="UniProtKB" id="P10906"/>
    </source>
</evidence>
<evidence type="ECO:0000255" key="2"/>
<evidence type="ECO:0000255" key="3">
    <source>
        <dbReference type="PROSITE-ProRule" id="PRU00441"/>
    </source>
</evidence>
<evidence type="ECO:0000305" key="4"/>
<feature type="chain" id="PRO_0000292692" description="sn-glycerol-3-phosphate transport system permease protein UgpE">
    <location>
        <begin position="1"/>
        <end position="281"/>
    </location>
</feature>
<feature type="transmembrane region" description="Helical" evidence="3">
    <location>
        <begin position="14"/>
        <end position="34"/>
    </location>
</feature>
<feature type="transmembrane region" description="Helical" evidence="3">
    <location>
        <begin position="85"/>
        <end position="105"/>
    </location>
</feature>
<feature type="transmembrane region" description="Helical" evidence="3">
    <location>
        <begin position="113"/>
        <end position="133"/>
    </location>
</feature>
<feature type="transmembrane region" description="Helical" evidence="3">
    <location>
        <begin position="142"/>
        <end position="162"/>
    </location>
</feature>
<feature type="transmembrane region" description="Helical" evidence="3">
    <location>
        <begin position="201"/>
        <end position="221"/>
    </location>
</feature>
<feature type="transmembrane region" description="Helical" evidence="3">
    <location>
        <begin position="247"/>
        <end position="267"/>
    </location>
</feature>
<feature type="domain" description="ABC transmembrane type-1" evidence="3">
    <location>
        <begin position="77"/>
        <end position="268"/>
    </location>
</feature>
<reference key="1">
    <citation type="journal article" date="2004" name="Proc. Natl. Acad. Sci. U.S.A.">
        <title>Insights into the evolution of Yersinia pestis through whole-genome comparison with Yersinia pseudotuberculosis.</title>
        <authorList>
            <person name="Chain P.S.G."/>
            <person name="Carniel E."/>
            <person name="Larimer F.W."/>
            <person name="Lamerdin J."/>
            <person name="Stoutland P.O."/>
            <person name="Regala W.M."/>
            <person name="Georgescu A.M."/>
            <person name="Vergez L.M."/>
            <person name="Land M.L."/>
            <person name="Motin V.L."/>
            <person name="Brubaker R.R."/>
            <person name="Fowler J."/>
            <person name="Hinnebusch J."/>
            <person name="Marceau M."/>
            <person name="Medigue C."/>
            <person name="Simonet M."/>
            <person name="Chenal-Francisque V."/>
            <person name="Souza B."/>
            <person name="Dacheux D."/>
            <person name="Elliott J.M."/>
            <person name="Derbise A."/>
            <person name="Hauser L.J."/>
            <person name="Garcia E."/>
        </authorList>
    </citation>
    <scope>NUCLEOTIDE SEQUENCE [LARGE SCALE GENOMIC DNA]</scope>
    <source>
        <strain>IP32953</strain>
    </source>
</reference>
<sequence>MIENRRGLDIFCHIMLIIGVLLILFPLYVAFVAASLDDSQVFQAPMTLIPGPHLWQNISHIWHAGVGNNSTPFGLMLLNSFVMAFAITVGKITVSILSAYAIVYFRFPLRNLFFWLIFLTLMLPVEVRIFPTIEVIANLNLLDSYTGLTLPLMASATATFLFRQFFMTLPDELLEAARIDGAGAMRFFWDIVLPLSKTNLAALFVITFIYGWNQYLWPILITSDASMGTAVAGIRSMISTSGAPTQWNQVMAAMILTLIPPVVVVLLMQRWFVRGLVDSEK</sequence>
<dbReference type="EMBL" id="BX936398">
    <property type="protein sequence ID" value="CAH19480.1"/>
    <property type="molecule type" value="Genomic_DNA"/>
</dbReference>
<dbReference type="RefSeq" id="WP_002211522.1">
    <property type="nucleotide sequence ID" value="NZ_CP009712.1"/>
</dbReference>
<dbReference type="SMR" id="Q66FU5"/>
<dbReference type="GeneID" id="57974914"/>
<dbReference type="KEGG" id="ypo:BZ17_2343"/>
<dbReference type="KEGG" id="yps:YPTB0240"/>
<dbReference type="PATRIC" id="fig|273123.14.peg.2465"/>
<dbReference type="Proteomes" id="UP000001011">
    <property type="component" value="Chromosome"/>
</dbReference>
<dbReference type="GO" id="GO:0005886">
    <property type="term" value="C:plasma membrane"/>
    <property type="evidence" value="ECO:0007669"/>
    <property type="project" value="UniProtKB-SubCell"/>
</dbReference>
<dbReference type="GO" id="GO:0055085">
    <property type="term" value="P:transmembrane transport"/>
    <property type="evidence" value="ECO:0007669"/>
    <property type="project" value="InterPro"/>
</dbReference>
<dbReference type="CDD" id="cd06261">
    <property type="entry name" value="TM_PBP2"/>
    <property type="match status" value="1"/>
</dbReference>
<dbReference type="Gene3D" id="1.10.3720.10">
    <property type="entry name" value="MetI-like"/>
    <property type="match status" value="1"/>
</dbReference>
<dbReference type="InterPro" id="IPR000515">
    <property type="entry name" value="MetI-like"/>
</dbReference>
<dbReference type="InterPro" id="IPR035906">
    <property type="entry name" value="MetI-like_sf"/>
</dbReference>
<dbReference type="NCBIfam" id="NF008210">
    <property type="entry name" value="PRK10973.1"/>
    <property type="match status" value="1"/>
</dbReference>
<dbReference type="PANTHER" id="PTHR43744">
    <property type="entry name" value="ABC TRANSPORTER PERMEASE PROTEIN MG189-RELATED-RELATED"/>
    <property type="match status" value="1"/>
</dbReference>
<dbReference type="PANTHER" id="PTHR43744:SF8">
    <property type="entry name" value="SN-GLYCEROL-3-PHOSPHATE TRANSPORT SYSTEM PERMEASE PROTEIN UGPE"/>
    <property type="match status" value="1"/>
</dbReference>
<dbReference type="Pfam" id="PF00528">
    <property type="entry name" value="BPD_transp_1"/>
    <property type="match status" value="1"/>
</dbReference>
<dbReference type="SUPFAM" id="SSF161098">
    <property type="entry name" value="MetI-like"/>
    <property type="match status" value="1"/>
</dbReference>
<dbReference type="PROSITE" id="PS50928">
    <property type="entry name" value="ABC_TM1"/>
    <property type="match status" value="1"/>
</dbReference>
<name>UGPE_YERPS</name>
<comment type="function">
    <text evidence="1">Part of the ABC transporter complex UgpBAEC involved in sn-glycerol-3-phosphate (G3P) import. Probably responsible for the translocation of the substrate across the membrane.</text>
</comment>
<comment type="subunit">
    <text evidence="1">The complex is composed of two ATP-binding proteins (UgpC), two transmembrane proteins (UgpA and UgpE) and a solute-binding protein (UgpB).</text>
</comment>
<comment type="subcellular location">
    <subcellularLocation>
        <location evidence="1">Cell inner membrane</location>
        <topology evidence="2">Multi-pass membrane protein</topology>
    </subcellularLocation>
</comment>
<comment type="similarity">
    <text evidence="4">Belongs to the binding-protein-dependent transport system permease family. UgpAE subfamily.</text>
</comment>
<keyword id="KW-0997">Cell inner membrane</keyword>
<keyword id="KW-1003">Cell membrane</keyword>
<keyword id="KW-0472">Membrane</keyword>
<keyword id="KW-0812">Transmembrane</keyword>
<keyword id="KW-1133">Transmembrane helix</keyword>
<keyword id="KW-0813">Transport</keyword>
<gene>
    <name type="primary">ugpE</name>
    <name type="ordered locus">YPTB0240</name>
</gene>
<proteinExistence type="inferred from homology"/>
<organism>
    <name type="scientific">Yersinia pseudotuberculosis serotype I (strain IP32953)</name>
    <dbReference type="NCBI Taxonomy" id="273123"/>
    <lineage>
        <taxon>Bacteria</taxon>
        <taxon>Pseudomonadati</taxon>
        <taxon>Pseudomonadota</taxon>
        <taxon>Gammaproteobacteria</taxon>
        <taxon>Enterobacterales</taxon>
        <taxon>Yersiniaceae</taxon>
        <taxon>Yersinia</taxon>
    </lineage>
</organism>
<accession>Q66FU5</accession>
<protein>
    <recommendedName>
        <fullName evidence="1">sn-glycerol-3-phosphate transport system permease protein UgpE</fullName>
    </recommendedName>
</protein>